<accession>A9MUB2</accession>
<sequence>MALLEICCYSMECALTAQRNGADRIELCAAPKEGGLTPSLGVLRSVREHITIPVHPIIRPRGGDFYYTDGEFAAMLEDIRLVRELGFPGLVTGVLTVDGDVDMSRMEKIMTAAGPLAVTFHRAFDMCANPFNALKNLADAGVARVLTSGQKADAAQGLSIIMELIAQGDAPIIMAGAGVRANNLQNFLDAGVREVHSSAGVLLPSPMRYRNQGLSMSADIQADEYSRYRVEGAAVAEMKGIIVRHQAK</sequence>
<reference key="1">
    <citation type="submission" date="2007-11" db="EMBL/GenBank/DDBJ databases">
        <authorList>
            <consortium name="The Salmonella enterica serovar Paratyphi B Genome Sequencing Project"/>
            <person name="McClelland M."/>
            <person name="Sanderson E.K."/>
            <person name="Porwollik S."/>
            <person name="Spieth J."/>
            <person name="Clifton W.S."/>
            <person name="Fulton R."/>
            <person name="Cordes M."/>
            <person name="Wollam A."/>
            <person name="Shah N."/>
            <person name="Pepin K."/>
            <person name="Bhonagiri V."/>
            <person name="Nash W."/>
            <person name="Johnson M."/>
            <person name="Thiruvilangam P."/>
            <person name="Wilson R."/>
        </authorList>
    </citation>
    <scope>NUCLEOTIDE SEQUENCE [LARGE SCALE GENOMIC DNA]</scope>
    <source>
        <strain>ATCC BAA-1250 / SPB7</strain>
    </source>
</reference>
<name>CUTC_SALPB</name>
<evidence type="ECO:0000255" key="1">
    <source>
        <dbReference type="HAMAP-Rule" id="MF_00795"/>
    </source>
</evidence>
<comment type="subunit">
    <text evidence="1">Homodimer.</text>
</comment>
<comment type="subcellular location">
    <subcellularLocation>
        <location evidence="1">Cytoplasm</location>
    </subcellularLocation>
</comment>
<comment type="similarity">
    <text evidence="1">Belongs to the CutC family.</text>
</comment>
<comment type="caution">
    <text evidence="1">Once thought to be involved in copper homeostasis, experiments in E.coli have shown this is not the case.</text>
</comment>
<keyword id="KW-0963">Cytoplasm</keyword>
<dbReference type="EMBL" id="CP000886">
    <property type="protein sequence ID" value="ABX66668.1"/>
    <property type="molecule type" value="Genomic_DNA"/>
</dbReference>
<dbReference type="RefSeq" id="WP_001185782.1">
    <property type="nucleotide sequence ID" value="NC_010102.1"/>
</dbReference>
<dbReference type="SMR" id="A9MUB2"/>
<dbReference type="KEGG" id="spq:SPAB_01256"/>
<dbReference type="PATRIC" id="fig|1016998.12.peg.1183"/>
<dbReference type="HOGENOM" id="CLU_050555_3_2_6"/>
<dbReference type="BioCyc" id="SENT1016998:SPAB_RS05210-MONOMER"/>
<dbReference type="Proteomes" id="UP000008556">
    <property type="component" value="Chromosome"/>
</dbReference>
<dbReference type="GO" id="GO:0005737">
    <property type="term" value="C:cytoplasm"/>
    <property type="evidence" value="ECO:0007669"/>
    <property type="project" value="UniProtKB-SubCell"/>
</dbReference>
<dbReference type="GO" id="GO:0005507">
    <property type="term" value="F:copper ion binding"/>
    <property type="evidence" value="ECO:0007669"/>
    <property type="project" value="TreeGrafter"/>
</dbReference>
<dbReference type="FunFam" id="3.20.20.380:FF:000001">
    <property type="entry name" value="Copper homeostasis protein CutC"/>
    <property type="match status" value="1"/>
</dbReference>
<dbReference type="Gene3D" id="3.20.20.380">
    <property type="entry name" value="Copper homeostasis (CutC) domain"/>
    <property type="match status" value="1"/>
</dbReference>
<dbReference type="HAMAP" id="MF_00795">
    <property type="entry name" value="CutC"/>
    <property type="match status" value="1"/>
</dbReference>
<dbReference type="InterPro" id="IPR005627">
    <property type="entry name" value="CutC-like"/>
</dbReference>
<dbReference type="InterPro" id="IPR036822">
    <property type="entry name" value="CutC-like_dom_sf"/>
</dbReference>
<dbReference type="NCBIfam" id="NF008603">
    <property type="entry name" value="PRK11572.1"/>
    <property type="match status" value="1"/>
</dbReference>
<dbReference type="PANTHER" id="PTHR12598">
    <property type="entry name" value="COPPER HOMEOSTASIS PROTEIN CUTC"/>
    <property type="match status" value="1"/>
</dbReference>
<dbReference type="PANTHER" id="PTHR12598:SF0">
    <property type="entry name" value="COPPER HOMEOSTASIS PROTEIN CUTC HOMOLOG"/>
    <property type="match status" value="1"/>
</dbReference>
<dbReference type="Pfam" id="PF03932">
    <property type="entry name" value="CutC"/>
    <property type="match status" value="1"/>
</dbReference>
<dbReference type="SUPFAM" id="SSF110395">
    <property type="entry name" value="CutC-like"/>
    <property type="match status" value="1"/>
</dbReference>
<proteinExistence type="inferred from homology"/>
<gene>
    <name evidence="1" type="primary">cutC</name>
    <name type="ordered locus">SPAB_01256</name>
</gene>
<organism>
    <name type="scientific">Salmonella paratyphi B (strain ATCC BAA-1250 / SPB7)</name>
    <dbReference type="NCBI Taxonomy" id="1016998"/>
    <lineage>
        <taxon>Bacteria</taxon>
        <taxon>Pseudomonadati</taxon>
        <taxon>Pseudomonadota</taxon>
        <taxon>Gammaproteobacteria</taxon>
        <taxon>Enterobacterales</taxon>
        <taxon>Enterobacteriaceae</taxon>
        <taxon>Salmonella</taxon>
    </lineage>
</organism>
<feature type="chain" id="PRO_1000083680" description="PF03932 family protein CutC">
    <location>
        <begin position="1"/>
        <end position="248"/>
    </location>
</feature>
<protein>
    <recommendedName>
        <fullName evidence="1">PF03932 family protein CutC</fullName>
    </recommendedName>
</protein>